<organism>
    <name type="scientific">Arabidopsis thaliana</name>
    <name type="common">Mouse-ear cress</name>
    <dbReference type="NCBI Taxonomy" id="3702"/>
    <lineage>
        <taxon>Eukaryota</taxon>
        <taxon>Viridiplantae</taxon>
        <taxon>Streptophyta</taxon>
        <taxon>Embryophyta</taxon>
        <taxon>Tracheophyta</taxon>
        <taxon>Spermatophyta</taxon>
        <taxon>Magnoliopsida</taxon>
        <taxon>eudicotyledons</taxon>
        <taxon>Gunneridae</taxon>
        <taxon>Pentapetalae</taxon>
        <taxon>rosids</taxon>
        <taxon>malvids</taxon>
        <taxon>Brassicales</taxon>
        <taxon>Brassicaceae</taxon>
        <taxon>Camelineae</taxon>
        <taxon>Arabidopsis</taxon>
    </lineage>
</organism>
<evidence type="ECO:0000250" key="1">
    <source>
        <dbReference type="UniProtKB" id="O48814"/>
    </source>
</evidence>
<evidence type="ECO:0000255" key="2">
    <source>
        <dbReference type="PROSITE-ProRule" id="PRU00159"/>
    </source>
</evidence>
<evidence type="ECO:0000256" key="3">
    <source>
        <dbReference type="SAM" id="MobiDB-lite"/>
    </source>
</evidence>
<evidence type="ECO:0000269" key="4">
    <source>
    </source>
</evidence>
<evidence type="ECO:0000269" key="5">
    <source>
    </source>
</evidence>
<evidence type="ECO:0000269" key="6">
    <source>
    </source>
</evidence>
<evidence type="ECO:0000303" key="7">
    <source>
    </source>
</evidence>
<evidence type="ECO:0000305" key="8">
    <source>
    </source>
</evidence>
<evidence type="ECO:0000312" key="9">
    <source>
        <dbReference type="Araport" id="AT3G02810"/>
    </source>
</evidence>
<evidence type="ECO:0000312" key="10">
    <source>
        <dbReference type="EMBL" id="AAF26979.1"/>
    </source>
</evidence>
<sequence>MHCFPCFSSPKNKKSSTTNETNDNNEPKPDDRRRAEETEEIEQSEGTSLKIFTFRELATATKNFRQECLLGEGGFGRVYKGTLKSTGQVVAVKQLDKHGLHGNKEFQAEVLSLGQLDHPNLVKLIGYCADGDQRLLVYDYISGGSLQDHLHEPKADSDPMDWTTRMQIAYAAAQGLDYLHDKANPPVIYRDLKASNILLDDDFSPKLSDFGLHKLGPGTGDKMMALSSRVMGTYGYSAPEYTRGGNLTLKSDVYSFGVVLLELITGRRALDTTRPNDEQNLVSWAQPIFRDPKRYPDMADPVLENKFSERGLNQAVAIASMCVQEEASARPLISDVMVALSFLSMPTEDGIPTTVPILSFKDKSMSIALSRHDSNLVSPPPELATEDDKSSTSSGEESSLESEKESVSKNEYKKKHEEEDSSMESDDESDSNSEHEKDQPPKPIDEKNQAQSLKIKYRYSWEDIDVNDERLSSKSSQKSNDESTSSRYDSDRDQDEKGKEEEEEEEAEEKHTHIEHIDSSKTDDDQSVYFDNDDDSGDDNGGSLHRIKSDVAIDSIKE</sequence>
<dbReference type="EC" id="2.7.11.-" evidence="2"/>
<dbReference type="EMBL" id="AC018363">
    <property type="protein sequence ID" value="AAF26979.1"/>
    <property type="molecule type" value="Genomic_DNA"/>
</dbReference>
<dbReference type="EMBL" id="CP002686">
    <property type="protein sequence ID" value="AEE73862.1"/>
    <property type="molecule type" value="Genomic_DNA"/>
</dbReference>
<dbReference type="EMBL" id="BT004041">
    <property type="protein sequence ID" value="AAO42074.1"/>
    <property type="molecule type" value="mRNA"/>
</dbReference>
<dbReference type="EMBL" id="BT004942">
    <property type="protein sequence ID" value="AAO50475.1"/>
    <property type="molecule type" value="mRNA"/>
</dbReference>
<dbReference type="RefSeq" id="NP_186930.1">
    <property type="nucleotide sequence ID" value="NM_111149.3"/>
</dbReference>
<dbReference type="SMR" id="Q9M8S2"/>
<dbReference type="FunCoup" id="Q9M8S2">
    <property type="interactions" value="555"/>
</dbReference>
<dbReference type="IntAct" id="Q9M8S2">
    <property type="interactions" value="1"/>
</dbReference>
<dbReference type="STRING" id="3702.Q9M8S2"/>
<dbReference type="PaxDb" id="3702-AT3G02810.1"/>
<dbReference type="ProteomicsDB" id="238560"/>
<dbReference type="EnsemblPlants" id="AT3G02810.1">
    <property type="protein sequence ID" value="AT3G02810.1"/>
    <property type="gene ID" value="AT3G02810"/>
</dbReference>
<dbReference type="GeneID" id="821236"/>
<dbReference type="Gramene" id="AT3G02810.1">
    <property type="protein sequence ID" value="AT3G02810.1"/>
    <property type="gene ID" value="AT3G02810"/>
</dbReference>
<dbReference type="KEGG" id="ath:AT3G02810"/>
<dbReference type="Araport" id="AT3G02810"/>
<dbReference type="TAIR" id="AT3G02810">
    <property type="gene designation" value="LIP2"/>
</dbReference>
<dbReference type="eggNOG" id="KOG1187">
    <property type="taxonomic scope" value="Eukaryota"/>
</dbReference>
<dbReference type="HOGENOM" id="CLU_000288_21_0_1"/>
<dbReference type="InParanoid" id="Q9M8S2"/>
<dbReference type="OMA" id="FIGVYYE"/>
<dbReference type="PhylomeDB" id="Q9M8S2"/>
<dbReference type="PRO" id="PR:Q9M8S2"/>
<dbReference type="Proteomes" id="UP000006548">
    <property type="component" value="Chromosome 3"/>
</dbReference>
<dbReference type="ExpressionAtlas" id="Q9M8S2">
    <property type="expression patterns" value="baseline and differential"/>
</dbReference>
<dbReference type="GO" id="GO:0005886">
    <property type="term" value="C:plasma membrane"/>
    <property type="evidence" value="ECO:0000314"/>
    <property type="project" value="TAIR"/>
</dbReference>
<dbReference type="GO" id="GO:0090404">
    <property type="term" value="C:pollen tube tip"/>
    <property type="evidence" value="ECO:0000314"/>
    <property type="project" value="TAIR"/>
</dbReference>
<dbReference type="GO" id="GO:0005524">
    <property type="term" value="F:ATP binding"/>
    <property type="evidence" value="ECO:0007669"/>
    <property type="project" value="UniProtKB-KW"/>
</dbReference>
<dbReference type="GO" id="GO:0004674">
    <property type="term" value="F:protein serine/threonine kinase activity"/>
    <property type="evidence" value="ECO:0007669"/>
    <property type="project" value="UniProtKB-KW"/>
</dbReference>
<dbReference type="GO" id="GO:0010183">
    <property type="term" value="P:pollen tube guidance"/>
    <property type="evidence" value="ECO:0000316"/>
    <property type="project" value="TAIR"/>
</dbReference>
<dbReference type="CDD" id="cd14066">
    <property type="entry name" value="STKc_IRAK"/>
    <property type="match status" value="1"/>
</dbReference>
<dbReference type="FunFam" id="3.30.200.20:FF:000266">
    <property type="entry name" value="probable serine/threonine-protein kinase RLCKVII"/>
    <property type="match status" value="1"/>
</dbReference>
<dbReference type="FunFam" id="1.10.510.10:FF:000032">
    <property type="entry name" value="Serine/threonine-protein kinase PBS1"/>
    <property type="match status" value="1"/>
</dbReference>
<dbReference type="Gene3D" id="3.30.200.20">
    <property type="entry name" value="Phosphorylase Kinase, domain 1"/>
    <property type="match status" value="1"/>
</dbReference>
<dbReference type="Gene3D" id="1.10.510.10">
    <property type="entry name" value="Transferase(Phosphotransferase) domain 1"/>
    <property type="match status" value="1"/>
</dbReference>
<dbReference type="InterPro" id="IPR011009">
    <property type="entry name" value="Kinase-like_dom_sf"/>
</dbReference>
<dbReference type="InterPro" id="IPR000719">
    <property type="entry name" value="Prot_kinase_dom"/>
</dbReference>
<dbReference type="InterPro" id="IPR017441">
    <property type="entry name" value="Protein_kinase_ATP_BS"/>
</dbReference>
<dbReference type="InterPro" id="IPR008271">
    <property type="entry name" value="Ser/Thr_kinase_AS"/>
</dbReference>
<dbReference type="PANTHER" id="PTHR47985">
    <property type="entry name" value="OS07G0668900 PROTEIN"/>
    <property type="match status" value="1"/>
</dbReference>
<dbReference type="PANTHER" id="PTHR47985:SF32">
    <property type="entry name" value="RECEPTOR-LIKE KINASE LIP2"/>
    <property type="match status" value="1"/>
</dbReference>
<dbReference type="Pfam" id="PF00069">
    <property type="entry name" value="Pkinase"/>
    <property type="match status" value="1"/>
</dbReference>
<dbReference type="SMART" id="SM00220">
    <property type="entry name" value="S_TKc"/>
    <property type="match status" value="1"/>
</dbReference>
<dbReference type="SUPFAM" id="SSF56112">
    <property type="entry name" value="Protein kinase-like (PK-like)"/>
    <property type="match status" value="1"/>
</dbReference>
<dbReference type="PROSITE" id="PS00107">
    <property type="entry name" value="PROTEIN_KINASE_ATP"/>
    <property type="match status" value="1"/>
</dbReference>
<dbReference type="PROSITE" id="PS50011">
    <property type="entry name" value="PROTEIN_KINASE_DOM"/>
    <property type="match status" value="1"/>
</dbReference>
<dbReference type="PROSITE" id="PS00108">
    <property type="entry name" value="PROTEIN_KINASE_ST"/>
    <property type="match status" value="1"/>
</dbReference>
<name>LIPG2_ARATH</name>
<gene>
    <name evidence="7" type="primary">LIP2</name>
    <name evidence="9" type="ordered locus">At3g02810</name>
    <name evidence="10" type="ORF">F13E7.25</name>
</gene>
<reference key="1">
    <citation type="journal article" date="2000" name="Nature">
        <title>Sequence and analysis of chromosome 3 of the plant Arabidopsis thaliana.</title>
        <authorList>
            <person name="Salanoubat M."/>
            <person name="Lemcke K."/>
            <person name="Rieger M."/>
            <person name="Ansorge W."/>
            <person name="Unseld M."/>
            <person name="Fartmann B."/>
            <person name="Valle G."/>
            <person name="Bloecker H."/>
            <person name="Perez-Alonso M."/>
            <person name="Obermaier B."/>
            <person name="Delseny M."/>
            <person name="Boutry M."/>
            <person name="Grivell L.A."/>
            <person name="Mache R."/>
            <person name="Puigdomenech P."/>
            <person name="De Simone V."/>
            <person name="Choisne N."/>
            <person name="Artiguenave F."/>
            <person name="Robert C."/>
            <person name="Brottier P."/>
            <person name="Wincker P."/>
            <person name="Cattolico L."/>
            <person name="Weissenbach J."/>
            <person name="Saurin W."/>
            <person name="Quetier F."/>
            <person name="Schaefer M."/>
            <person name="Mueller-Auer S."/>
            <person name="Gabel C."/>
            <person name="Fuchs M."/>
            <person name="Benes V."/>
            <person name="Wurmbach E."/>
            <person name="Drzonek H."/>
            <person name="Erfle H."/>
            <person name="Jordan N."/>
            <person name="Bangert S."/>
            <person name="Wiedelmann R."/>
            <person name="Kranz H."/>
            <person name="Voss H."/>
            <person name="Holland R."/>
            <person name="Brandt P."/>
            <person name="Nyakatura G."/>
            <person name="Vezzi A."/>
            <person name="D'Angelo M."/>
            <person name="Pallavicini A."/>
            <person name="Toppo S."/>
            <person name="Simionati B."/>
            <person name="Conrad A."/>
            <person name="Hornischer K."/>
            <person name="Kauer G."/>
            <person name="Loehnert T.-H."/>
            <person name="Nordsiek G."/>
            <person name="Reichelt J."/>
            <person name="Scharfe M."/>
            <person name="Schoen O."/>
            <person name="Bargues M."/>
            <person name="Terol J."/>
            <person name="Climent J."/>
            <person name="Navarro P."/>
            <person name="Collado C."/>
            <person name="Perez-Perez A."/>
            <person name="Ottenwaelder B."/>
            <person name="Duchemin D."/>
            <person name="Cooke R."/>
            <person name="Laudie M."/>
            <person name="Berger-Llauro C."/>
            <person name="Purnelle B."/>
            <person name="Masuy D."/>
            <person name="de Haan M."/>
            <person name="Maarse A.C."/>
            <person name="Alcaraz J.-P."/>
            <person name="Cottet A."/>
            <person name="Casacuberta E."/>
            <person name="Monfort A."/>
            <person name="Argiriou A."/>
            <person name="Flores M."/>
            <person name="Liguori R."/>
            <person name="Vitale D."/>
            <person name="Mannhaupt G."/>
            <person name="Haase D."/>
            <person name="Schoof H."/>
            <person name="Rudd S."/>
            <person name="Zaccaria P."/>
            <person name="Mewes H.-W."/>
            <person name="Mayer K.F.X."/>
            <person name="Kaul S."/>
            <person name="Town C.D."/>
            <person name="Koo H.L."/>
            <person name="Tallon L.J."/>
            <person name="Jenkins J."/>
            <person name="Rooney T."/>
            <person name="Rizzo M."/>
            <person name="Walts A."/>
            <person name="Utterback T."/>
            <person name="Fujii C.Y."/>
            <person name="Shea T.P."/>
            <person name="Creasy T.H."/>
            <person name="Haas B."/>
            <person name="Maiti R."/>
            <person name="Wu D."/>
            <person name="Peterson J."/>
            <person name="Van Aken S."/>
            <person name="Pai G."/>
            <person name="Militscher J."/>
            <person name="Sellers P."/>
            <person name="Gill J.E."/>
            <person name="Feldblyum T.V."/>
            <person name="Preuss D."/>
            <person name="Lin X."/>
            <person name="Nierman W.C."/>
            <person name="Salzberg S.L."/>
            <person name="White O."/>
            <person name="Venter J.C."/>
            <person name="Fraser C.M."/>
            <person name="Kaneko T."/>
            <person name="Nakamura Y."/>
            <person name="Sato S."/>
            <person name="Kato T."/>
            <person name="Asamizu E."/>
            <person name="Sasamoto S."/>
            <person name="Kimura T."/>
            <person name="Idesawa K."/>
            <person name="Kawashima K."/>
            <person name="Kishida Y."/>
            <person name="Kiyokawa C."/>
            <person name="Kohara M."/>
            <person name="Matsumoto M."/>
            <person name="Matsuno A."/>
            <person name="Muraki A."/>
            <person name="Nakayama S."/>
            <person name="Nakazaki N."/>
            <person name="Shinpo S."/>
            <person name="Takeuchi C."/>
            <person name="Wada T."/>
            <person name="Watanabe A."/>
            <person name="Yamada M."/>
            <person name="Yasuda M."/>
            <person name="Tabata S."/>
        </authorList>
    </citation>
    <scope>NUCLEOTIDE SEQUENCE [LARGE SCALE GENOMIC DNA]</scope>
    <source>
        <strain>cv. Columbia</strain>
    </source>
</reference>
<reference key="2">
    <citation type="journal article" date="2017" name="Plant J.">
        <title>Araport11: a complete reannotation of the Arabidopsis thaliana reference genome.</title>
        <authorList>
            <person name="Cheng C.Y."/>
            <person name="Krishnakumar V."/>
            <person name="Chan A.P."/>
            <person name="Thibaud-Nissen F."/>
            <person name="Schobel S."/>
            <person name="Town C.D."/>
        </authorList>
    </citation>
    <scope>GENOME REANNOTATION</scope>
    <source>
        <strain>cv. Columbia</strain>
    </source>
</reference>
<reference key="3">
    <citation type="journal article" date="2003" name="Science">
        <title>Empirical analysis of transcriptional activity in the Arabidopsis genome.</title>
        <authorList>
            <person name="Yamada K."/>
            <person name="Lim J."/>
            <person name="Dale J.M."/>
            <person name="Chen H."/>
            <person name="Shinn P."/>
            <person name="Palm C.J."/>
            <person name="Southwick A.M."/>
            <person name="Wu H.C."/>
            <person name="Kim C.J."/>
            <person name="Nguyen M."/>
            <person name="Pham P.K."/>
            <person name="Cheuk R.F."/>
            <person name="Karlin-Newmann G."/>
            <person name="Liu S.X."/>
            <person name="Lam B."/>
            <person name="Sakano H."/>
            <person name="Wu T."/>
            <person name="Yu G."/>
            <person name="Miranda M."/>
            <person name="Quach H.L."/>
            <person name="Tripp M."/>
            <person name="Chang C.H."/>
            <person name="Lee J.M."/>
            <person name="Toriumi M.J."/>
            <person name="Chan M.M."/>
            <person name="Tang C.C."/>
            <person name="Onodera C.S."/>
            <person name="Deng J.M."/>
            <person name="Akiyama K."/>
            <person name="Ansari Y."/>
            <person name="Arakawa T."/>
            <person name="Banh J."/>
            <person name="Banno F."/>
            <person name="Bowser L."/>
            <person name="Brooks S.Y."/>
            <person name="Carninci P."/>
            <person name="Chao Q."/>
            <person name="Choy N."/>
            <person name="Enju A."/>
            <person name="Goldsmith A.D."/>
            <person name="Gurjal M."/>
            <person name="Hansen N.F."/>
            <person name="Hayashizaki Y."/>
            <person name="Johnson-Hopson C."/>
            <person name="Hsuan V.W."/>
            <person name="Iida K."/>
            <person name="Karnes M."/>
            <person name="Khan S."/>
            <person name="Koesema E."/>
            <person name="Ishida J."/>
            <person name="Jiang P.X."/>
            <person name="Jones T."/>
            <person name="Kawai J."/>
            <person name="Kamiya A."/>
            <person name="Meyers C."/>
            <person name="Nakajima M."/>
            <person name="Narusaka M."/>
            <person name="Seki M."/>
            <person name="Sakurai T."/>
            <person name="Satou M."/>
            <person name="Tamse R."/>
            <person name="Vaysberg M."/>
            <person name="Wallender E.K."/>
            <person name="Wong C."/>
            <person name="Yamamura Y."/>
            <person name="Yuan S."/>
            <person name="Shinozaki K."/>
            <person name="Davis R.W."/>
            <person name="Theologis A."/>
            <person name="Ecker J.R."/>
        </authorList>
    </citation>
    <scope>NUCLEOTIDE SEQUENCE [LARGE SCALE MRNA]</scope>
    <source>
        <strain>cv. Columbia</strain>
    </source>
</reference>
<reference key="4">
    <citation type="journal article" date="2013" name="Curr. Biol.">
        <title>Membrane-bound RLCKs LIP1 and LIP2 are essential male factors controlling male-female attraction in Arabidopsis.</title>
        <authorList>
            <person name="Liu J."/>
            <person name="Zhong S."/>
            <person name="Guo X."/>
            <person name="Hao L."/>
            <person name="Wei X."/>
            <person name="Huang Q."/>
            <person name="Hou Y."/>
            <person name="Shi J."/>
            <person name="Wang C."/>
            <person name="Gu H."/>
            <person name="Qu L.J."/>
        </authorList>
    </citation>
    <scope>FUNCTION</scope>
    <scope>TISSUE SPECIFICITY</scope>
    <scope>SUBCELLULAR LOCATION</scope>
    <scope>DISRUPTION PHENOTYPE</scope>
    <scope>MUTAGENESIS OF CYS-3 AND CYS-6</scope>
    <scope>PALMITOYLATION</scope>
</reference>
<reference key="5">
    <citation type="journal article" date="2014" name="Plant Physiol.">
        <title>ABNORMAL POLLEN TUBE GUIDANCE1, an endoplasmic reticulum-localized mannosyltransferase homolog of GLYCOSYLPHOSPHATIDYLINOSITOL10 in yeast and PHOSPHATIDYLINOSITOL GLYCAN ANCHOR BIOSYNTHESIS B in human, is required for Arabidopsis pollen tube micropylar guidance and embryo development.</title>
        <authorList>
            <person name="Dai X.R."/>
            <person name="Gao X.-Q."/>
            <person name="Chen G.H."/>
            <person name="Tang L.L."/>
            <person name="Wang H."/>
            <person name="Zhang X.S."/>
        </authorList>
    </citation>
    <scope>SUBCELLULAR LOCATION</scope>
    <source>
        <strain>cv. Columbia</strain>
    </source>
</reference>
<reference key="6">
    <citation type="journal article" date="2016" name="Nature">
        <title>Tip-localized receptors control pollen tube growth and LURE sensing in Arabidopsis.</title>
        <authorList>
            <person name="Takeuchi H."/>
            <person name="Higashiyama T."/>
        </authorList>
    </citation>
    <scope>INTERACTION WITH PRK6</scope>
</reference>
<accession>Q9M8S2</accession>
<comment type="function">
    <text evidence="4">Involved in pollen tube guidance into micropyle. Participates in perception of the ovule-secreted peptide signal LURE1.</text>
</comment>
<comment type="subunit">
    <text evidence="6">Interacts with PRK6.</text>
</comment>
<comment type="subcellular location">
    <subcellularLocation>
        <location evidence="4 5">Cell membrane</location>
        <topology evidence="8">Lipid-anchor</topology>
    </subcellularLocation>
</comment>
<comment type="tissue specificity">
    <text evidence="4">Expressed in mature pollen and in germinating pollen tubes.</text>
</comment>
<comment type="PTM">
    <text evidence="8">Palmitoylated.</text>
</comment>
<comment type="disruption phenotype">
    <text evidence="4">No visible phenotype. Lip1 and lip2 double mutants have a reduced male transmission.</text>
</comment>
<comment type="similarity">
    <text evidence="2">Belongs to the protein kinase superfamily. Ser/Thr protein kinase family.</text>
</comment>
<protein>
    <recommendedName>
        <fullName evidence="7">Receptor-like kinase LIP2</fullName>
        <ecNumber evidence="2">2.7.11.-</ecNumber>
    </recommendedName>
    <alternativeName>
        <fullName evidence="7">Protein LOST IN POLLEN TUBE GUIDANCE 2</fullName>
        <shortName evidence="7">AtLIP2</shortName>
    </alternativeName>
</protein>
<keyword id="KW-0067">ATP-binding</keyword>
<keyword id="KW-1003">Cell membrane</keyword>
<keyword id="KW-0418">Kinase</keyword>
<keyword id="KW-0449">Lipoprotein</keyword>
<keyword id="KW-0472">Membrane</keyword>
<keyword id="KW-0547">Nucleotide-binding</keyword>
<keyword id="KW-0597">Phosphoprotein</keyword>
<keyword id="KW-1185">Reference proteome</keyword>
<keyword id="KW-0723">Serine/threonine-protein kinase</keyword>
<keyword id="KW-0808">Transferase</keyword>
<proteinExistence type="evidence at protein level"/>
<feature type="chain" id="PRO_0000436435" description="Receptor-like kinase LIP2">
    <location>
        <begin position="1"/>
        <end position="558"/>
    </location>
</feature>
<feature type="domain" description="Protein kinase" evidence="2">
    <location>
        <begin position="64"/>
        <end position="343"/>
    </location>
</feature>
<feature type="region of interest" description="Disordered" evidence="3">
    <location>
        <begin position="1"/>
        <end position="45"/>
    </location>
</feature>
<feature type="region of interest" description="Disordered" evidence="3">
    <location>
        <begin position="372"/>
        <end position="558"/>
    </location>
</feature>
<feature type="compositionally biased region" description="Low complexity" evidence="3">
    <location>
        <begin position="15"/>
        <end position="24"/>
    </location>
</feature>
<feature type="compositionally biased region" description="Basic and acidic residues" evidence="3">
    <location>
        <begin position="25"/>
        <end position="36"/>
    </location>
</feature>
<feature type="compositionally biased region" description="Basic and acidic residues" evidence="3">
    <location>
        <begin position="401"/>
        <end position="418"/>
    </location>
</feature>
<feature type="compositionally biased region" description="Acidic residues" evidence="3">
    <location>
        <begin position="419"/>
        <end position="431"/>
    </location>
</feature>
<feature type="compositionally biased region" description="Basic and acidic residues" evidence="3">
    <location>
        <begin position="432"/>
        <end position="448"/>
    </location>
</feature>
<feature type="compositionally biased region" description="Low complexity" evidence="3">
    <location>
        <begin position="473"/>
        <end position="486"/>
    </location>
</feature>
<feature type="compositionally biased region" description="Basic and acidic residues" evidence="3">
    <location>
        <begin position="488"/>
        <end position="500"/>
    </location>
</feature>
<feature type="compositionally biased region" description="Basic and acidic residues" evidence="3">
    <location>
        <begin position="508"/>
        <end position="524"/>
    </location>
</feature>
<feature type="compositionally biased region" description="Basic and acidic residues" evidence="3">
    <location>
        <begin position="547"/>
        <end position="558"/>
    </location>
</feature>
<feature type="active site" description="Proton acceptor" evidence="2">
    <location>
        <position position="191"/>
    </location>
</feature>
<feature type="binding site" evidence="2">
    <location>
        <begin position="70"/>
        <end position="78"/>
    </location>
    <ligand>
        <name>ATP</name>
        <dbReference type="ChEBI" id="CHEBI:30616"/>
    </ligand>
</feature>
<feature type="binding site" evidence="2">
    <location>
        <position position="93"/>
    </location>
    <ligand>
        <name>ATP</name>
        <dbReference type="ChEBI" id="CHEBI:30616"/>
    </ligand>
</feature>
<feature type="modified residue" description="Phosphothreonine" evidence="1">
    <location>
        <position position="53"/>
    </location>
</feature>
<feature type="modified residue" description="Phosphotyrosine" evidence="1">
    <location>
        <position position="138"/>
    </location>
</feature>
<feature type="modified residue" description="Phosphoserine" evidence="1">
    <location>
        <position position="195"/>
    </location>
</feature>
<feature type="modified residue" description="Phosphoserine" evidence="1">
    <location>
        <position position="227"/>
    </location>
</feature>
<feature type="modified residue" description="Phosphothreonine" evidence="1">
    <location>
        <position position="233"/>
    </location>
</feature>
<feature type="modified residue" description="Phosphotyrosine" evidence="1">
    <location>
        <position position="241"/>
    </location>
</feature>
<feature type="mutagenesis site" description="Loss of membrane localization; when associated with S-6." evidence="4">
    <original>C</original>
    <variation>S</variation>
    <location>
        <position position="3"/>
    </location>
</feature>
<feature type="mutagenesis site" description="Loss of membrane localization; when associated with S-3." evidence="4">
    <original>C</original>
    <variation>S</variation>
    <location>
        <position position="6"/>
    </location>
</feature>